<feature type="chain" id="PRO_0000165662" description="RuvB-like helicase 2">
    <location>
        <begin position="1"/>
        <end position="469"/>
    </location>
</feature>
<feature type="binding site" evidence="1">
    <location>
        <begin position="74"/>
        <end position="81"/>
    </location>
    <ligand>
        <name>ATP</name>
        <dbReference type="ChEBI" id="CHEBI:30616"/>
    </ligand>
</feature>
<comment type="function">
    <text evidence="1">DNA helicase which participates in several chromatin remodeling complexes, including the SWR1 and the INO80 complexes. The SWR1 complex mediates the ATP-dependent exchange of histone H2A for the H2A variant HZT1 leading to transcriptional regulation of selected genes by chromatin remodeling. The INO80 complex remodels chromatin by shifting nucleosomes and is involved in DNA repair. Also involved in pre-rRNA processing (By similarity).</text>
</comment>
<comment type="catalytic activity">
    <reaction>
        <text>ATP + H2O = ADP + phosphate + H(+)</text>
        <dbReference type="Rhea" id="RHEA:13065"/>
        <dbReference type="ChEBI" id="CHEBI:15377"/>
        <dbReference type="ChEBI" id="CHEBI:15378"/>
        <dbReference type="ChEBI" id="CHEBI:30616"/>
        <dbReference type="ChEBI" id="CHEBI:43474"/>
        <dbReference type="ChEBI" id="CHEBI:456216"/>
        <dbReference type="EC" id="3.6.4.12"/>
    </reaction>
</comment>
<comment type="subunit">
    <text evidence="1">May form heterododecamers with RVB1. Component of the SWR1 chromatin remodeling complex, the INO80 chromatin remodeling complex, and of the R2TP complex (By similarity).</text>
</comment>
<comment type="subcellular location">
    <subcellularLocation>
        <location evidence="1">Nucleus</location>
    </subcellularLocation>
</comment>
<comment type="similarity">
    <text evidence="2">Belongs to the RuvB family.</text>
</comment>
<reference key="1">
    <citation type="journal article" date="2004" name="Science">
        <title>The Ashbya gossypii genome as a tool for mapping the ancient Saccharomyces cerevisiae genome.</title>
        <authorList>
            <person name="Dietrich F.S."/>
            <person name="Voegeli S."/>
            <person name="Brachat S."/>
            <person name="Lerch A."/>
            <person name="Gates K."/>
            <person name="Steiner S."/>
            <person name="Mohr C."/>
            <person name="Poehlmann R."/>
            <person name="Luedi P."/>
            <person name="Choi S."/>
            <person name="Wing R.A."/>
            <person name="Flavier A."/>
            <person name="Gaffney T.D."/>
            <person name="Philippsen P."/>
        </authorList>
    </citation>
    <scope>NUCLEOTIDE SEQUENCE [LARGE SCALE GENOMIC DNA]</scope>
    <source>
        <strain>ATCC 10895 / CBS 109.51 / FGSC 9923 / NRRL Y-1056</strain>
    </source>
</reference>
<reference key="2">
    <citation type="journal article" date="2013" name="G3 (Bethesda)">
        <title>Genomes of Ashbya fungi isolated from insects reveal four mating-type loci, numerous translocations, lack of transposons, and distinct gene duplications.</title>
        <authorList>
            <person name="Dietrich F.S."/>
            <person name="Voegeli S."/>
            <person name="Kuo S."/>
            <person name="Philippsen P."/>
        </authorList>
    </citation>
    <scope>GENOME REANNOTATION</scope>
    <scope>SEQUENCE REVISION TO 268</scope>
    <source>
        <strain>ATCC 10895 / CBS 109.51 / FGSC 9923 / NRRL Y-1056</strain>
    </source>
</reference>
<evidence type="ECO:0000250" key="1"/>
<evidence type="ECO:0000305" key="2"/>
<sequence length="469" mass="51511">MSIQTQEAHDMSLKSLSLIATHSHIVGLGLDENLQPKPSSQGMVGQLQARRAAGVILKMVQNGTIAGRAVLVAGPPSTGKTALAMGLSQSLGADVPFTAMAGSEIFSLELSKTEALTQAFRKSIGVKIKEDTELIEGEVVEIQIDRSITGGHKQGKLTIKTTDMETIYELGNKMIDGLTKEKVLAGDVISIDKACGKITKLGRSFARSRDYDAMGPDTKFVQCPEGELQKRKSVVHTVSLHEIDVINSRTQGFLALFTGDTGEIRSEVRDQINTKVAEWKEEGKAEIVPGVLFIDEVHMLDIECFSFINRALEDEFAPIVIMATNRGISKTRGTNYKSPHGLPLDLLDRSIIITTQNYSEQEIKTILSIRSQEEEVELTEDALDLLTKIGGETSLRYSSNLIAVSQQIAQKRKSSSVDVQDVKRAYLLFLDSTRSAKYLQEYESRYIDDHGRVDISTTGRNADAMDTNE</sequence>
<name>RUVB2_EREGS</name>
<keyword id="KW-0010">Activator</keyword>
<keyword id="KW-0067">ATP-binding</keyword>
<keyword id="KW-0156">Chromatin regulator</keyword>
<keyword id="KW-0227">DNA damage</keyword>
<keyword id="KW-0234">DNA repair</keyword>
<keyword id="KW-0347">Helicase</keyword>
<keyword id="KW-0378">Hydrolase</keyword>
<keyword id="KW-0547">Nucleotide-binding</keyword>
<keyword id="KW-0539">Nucleus</keyword>
<keyword id="KW-1185">Reference proteome</keyword>
<keyword id="KW-0698">rRNA processing</keyword>
<keyword id="KW-0804">Transcription</keyword>
<keyword id="KW-0805">Transcription regulation</keyword>
<proteinExistence type="inferred from homology"/>
<accession>Q755G5</accession>
<protein>
    <recommendedName>
        <fullName>RuvB-like helicase 2</fullName>
        <ecNumber>3.6.4.12</ecNumber>
    </recommendedName>
</protein>
<organism>
    <name type="scientific">Eremothecium gossypii (strain ATCC 10895 / CBS 109.51 / FGSC 9923 / NRRL Y-1056)</name>
    <name type="common">Yeast</name>
    <name type="synonym">Ashbya gossypii</name>
    <dbReference type="NCBI Taxonomy" id="284811"/>
    <lineage>
        <taxon>Eukaryota</taxon>
        <taxon>Fungi</taxon>
        <taxon>Dikarya</taxon>
        <taxon>Ascomycota</taxon>
        <taxon>Saccharomycotina</taxon>
        <taxon>Saccharomycetes</taxon>
        <taxon>Saccharomycetales</taxon>
        <taxon>Saccharomycetaceae</taxon>
        <taxon>Eremothecium</taxon>
    </lineage>
</organism>
<gene>
    <name type="primary">RVB2</name>
    <name type="ordered locus">AFL142W</name>
</gene>
<dbReference type="EC" id="3.6.4.12"/>
<dbReference type="EMBL" id="AE016819">
    <property type="protein sequence ID" value="AAS53232.2"/>
    <property type="molecule type" value="Genomic_DNA"/>
</dbReference>
<dbReference type="RefSeq" id="NP_985408.2">
    <property type="nucleotide sequence ID" value="NM_210762.2"/>
</dbReference>
<dbReference type="SMR" id="Q755G5"/>
<dbReference type="FunCoup" id="Q755G5">
    <property type="interactions" value="1701"/>
</dbReference>
<dbReference type="STRING" id="284811.Q755G5"/>
<dbReference type="EnsemblFungi" id="AAS53232">
    <property type="protein sequence ID" value="AAS53232"/>
    <property type="gene ID" value="AGOS_AFL142W"/>
</dbReference>
<dbReference type="GeneID" id="4621634"/>
<dbReference type="KEGG" id="ago:AGOS_AFL142W"/>
<dbReference type="eggNOG" id="KOG2680">
    <property type="taxonomic scope" value="Eukaryota"/>
</dbReference>
<dbReference type="HOGENOM" id="CLU_028311_4_0_1"/>
<dbReference type="InParanoid" id="Q755G5"/>
<dbReference type="OMA" id="IINTEPY"/>
<dbReference type="OrthoDB" id="10060499at2759"/>
<dbReference type="Proteomes" id="UP000000591">
    <property type="component" value="Chromosome VI"/>
</dbReference>
<dbReference type="GO" id="GO:0031011">
    <property type="term" value="C:Ino80 complex"/>
    <property type="evidence" value="ECO:0000318"/>
    <property type="project" value="GO_Central"/>
</dbReference>
<dbReference type="GO" id="GO:0035267">
    <property type="term" value="C:NuA4 histone acetyltransferase complex"/>
    <property type="evidence" value="ECO:0000318"/>
    <property type="project" value="GO_Central"/>
</dbReference>
<dbReference type="GO" id="GO:0097255">
    <property type="term" value="C:R2TP complex"/>
    <property type="evidence" value="ECO:0000318"/>
    <property type="project" value="GO_Central"/>
</dbReference>
<dbReference type="GO" id="GO:0000812">
    <property type="term" value="C:Swr1 complex"/>
    <property type="evidence" value="ECO:0000318"/>
    <property type="project" value="GO_Central"/>
</dbReference>
<dbReference type="GO" id="GO:0043138">
    <property type="term" value="F:3'-5' DNA helicase activity"/>
    <property type="evidence" value="ECO:0007669"/>
    <property type="project" value="EnsemblFungi"/>
</dbReference>
<dbReference type="GO" id="GO:0043139">
    <property type="term" value="F:5'-3' DNA helicase activity"/>
    <property type="evidence" value="ECO:0007669"/>
    <property type="project" value="EnsemblFungi"/>
</dbReference>
<dbReference type="GO" id="GO:0005524">
    <property type="term" value="F:ATP binding"/>
    <property type="evidence" value="ECO:0007669"/>
    <property type="project" value="UniProtKB-KW"/>
</dbReference>
<dbReference type="GO" id="GO:0016887">
    <property type="term" value="F:ATP hydrolysis activity"/>
    <property type="evidence" value="ECO:0007669"/>
    <property type="project" value="InterPro"/>
</dbReference>
<dbReference type="GO" id="GO:0003678">
    <property type="term" value="F:DNA helicase activity"/>
    <property type="evidence" value="ECO:0000318"/>
    <property type="project" value="GO_Central"/>
</dbReference>
<dbReference type="GO" id="GO:0000492">
    <property type="term" value="P:box C/D snoRNP assembly"/>
    <property type="evidence" value="ECO:0000318"/>
    <property type="project" value="GO_Central"/>
</dbReference>
<dbReference type="GO" id="GO:0006338">
    <property type="term" value="P:chromatin remodeling"/>
    <property type="evidence" value="ECO:0000318"/>
    <property type="project" value="GO_Central"/>
</dbReference>
<dbReference type="GO" id="GO:0006281">
    <property type="term" value="P:DNA repair"/>
    <property type="evidence" value="ECO:0007669"/>
    <property type="project" value="UniProtKB-KW"/>
</dbReference>
<dbReference type="GO" id="GO:0006357">
    <property type="term" value="P:regulation of transcription by RNA polymerase II"/>
    <property type="evidence" value="ECO:0000318"/>
    <property type="project" value="GO_Central"/>
</dbReference>
<dbReference type="GO" id="GO:0006364">
    <property type="term" value="P:rRNA processing"/>
    <property type="evidence" value="ECO:0007669"/>
    <property type="project" value="UniProtKB-KW"/>
</dbReference>
<dbReference type="FunFam" id="3.40.50.300:FF:002221">
    <property type="entry name" value="RuvB-like 2"/>
    <property type="match status" value="2"/>
</dbReference>
<dbReference type="FunFam" id="1.10.8.60:FF:000010">
    <property type="entry name" value="RuvB-like helicase"/>
    <property type="match status" value="1"/>
</dbReference>
<dbReference type="FunFam" id="2.40.50.360:FF:000002">
    <property type="entry name" value="RuvB-like helicase"/>
    <property type="match status" value="1"/>
</dbReference>
<dbReference type="Gene3D" id="1.10.8.60">
    <property type="match status" value="1"/>
</dbReference>
<dbReference type="Gene3D" id="3.40.50.300">
    <property type="entry name" value="P-loop containing nucleotide triphosphate hydrolases"/>
    <property type="match status" value="1"/>
</dbReference>
<dbReference type="Gene3D" id="2.40.50.360">
    <property type="entry name" value="RuvB-like helicase, domain II"/>
    <property type="match status" value="1"/>
</dbReference>
<dbReference type="InterPro" id="IPR003593">
    <property type="entry name" value="AAA+_ATPase"/>
</dbReference>
<dbReference type="InterPro" id="IPR027417">
    <property type="entry name" value="P-loop_NTPase"/>
</dbReference>
<dbReference type="InterPro" id="IPR027238">
    <property type="entry name" value="RuvB-like"/>
</dbReference>
<dbReference type="InterPro" id="IPR041048">
    <property type="entry name" value="RuvB-like_C"/>
</dbReference>
<dbReference type="InterPro" id="IPR042487">
    <property type="entry name" value="RuvBL1/2_DNA/RNA_bd_dom"/>
</dbReference>
<dbReference type="InterPro" id="IPR010339">
    <property type="entry name" value="TIP49_P-loop"/>
</dbReference>
<dbReference type="PANTHER" id="PTHR11093">
    <property type="entry name" value="RUVB-RELATED REPTIN AND PONTIN"/>
    <property type="match status" value="1"/>
</dbReference>
<dbReference type="Pfam" id="PF06068">
    <property type="entry name" value="TIP49"/>
    <property type="match status" value="1"/>
</dbReference>
<dbReference type="Pfam" id="PF17856">
    <property type="entry name" value="TIP49_C"/>
    <property type="match status" value="1"/>
</dbReference>
<dbReference type="SMART" id="SM00382">
    <property type="entry name" value="AAA"/>
    <property type="match status" value="1"/>
</dbReference>
<dbReference type="SUPFAM" id="SSF52540">
    <property type="entry name" value="P-loop containing nucleoside triphosphate hydrolases"/>
    <property type="match status" value="1"/>
</dbReference>